<reference key="1">
    <citation type="journal article" date="2006" name="Proc. Natl. Acad. Sci. U.S.A.">
        <title>The complete genome sequence of Lactobacillus bulgaricus reveals extensive and ongoing reductive evolution.</title>
        <authorList>
            <person name="van de Guchte M."/>
            <person name="Penaud S."/>
            <person name="Grimaldi C."/>
            <person name="Barbe V."/>
            <person name="Bryson K."/>
            <person name="Nicolas P."/>
            <person name="Robert C."/>
            <person name="Oztas S."/>
            <person name="Mangenot S."/>
            <person name="Couloux A."/>
            <person name="Loux V."/>
            <person name="Dervyn R."/>
            <person name="Bossy R."/>
            <person name="Bolotin A."/>
            <person name="Batto J.-M."/>
            <person name="Walunas T."/>
            <person name="Gibrat J.-F."/>
            <person name="Bessieres P."/>
            <person name="Weissenbach J."/>
            <person name="Ehrlich S.D."/>
            <person name="Maguin E."/>
        </authorList>
    </citation>
    <scope>NUCLEOTIDE SEQUENCE [LARGE SCALE GENOMIC DNA]</scope>
    <source>
        <strain>ATCC 11842 / DSM 20081 / BCRC 10696 / JCM 1002 / NBRC 13953 / NCIMB 11778 / NCTC 12712 / WDCM 00102 / Lb 14</strain>
    </source>
</reference>
<feature type="chain" id="PRO_1000001776" description="Phosphate acyltransferase">
    <location>
        <begin position="1"/>
        <end position="330"/>
    </location>
</feature>
<keyword id="KW-0963">Cytoplasm</keyword>
<keyword id="KW-0444">Lipid biosynthesis</keyword>
<keyword id="KW-0443">Lipid metabolism</keyword>
<keyword id="KW-0594">Phospholipid biosynthesis</keyword>
<keyword id="KW-1208">Phospholipid metabolism</keyword>
<keyword id="KW-1185">Reference proteome</keyword>
<keyword id="KW-0808">Transferase</keyword>
<sequence>MRKIAIDAMGGENAPEEIVEAVLKAKPELPEDKFIFFGDEGKMKELLPADDDQIEIVATTEVILDEDEPVKAMRTKKDSSMVVAANWVKEGKADALLSLGNTGALLTCGIFIVGRIKGVARPGLMPTMPVESSDDGFNIIDVGANATSKPEYLLQWAEMASYYAEKVRGVSKPRVALLNNGAEFDKGDDLHKEVYQLLQDSSLNFTGNIEGHELLQGKADVVVTDGFTGNAVLKSIEGTGSVIIHMLKDGLLNNGVKAKLGALLAKDALKSVASRFDKDKYGGAVLLGLNSPVVKQHGRSDARAVYYAVKQIDKILTEDLTNTFKQEFSK</sequence>
<organism>
    <name type="scientific">Lactobacillus delbrueckii subsp. bulgaricus (strain ATCC 11842 / DSM 20081 / BCRC 10696 / JCM 1002 / NBRC 13953 / NCIMB 11778 / NCTC 12712 / WDCM 00102 / Lb 14)</name>
    <dbReference type="NCBI Taxonomy" id="390333"/>
    <lineage>
        <taxon>Bacteria</taxon>
        <taxon>Bacillati</taxon>
        <taxon>Bacillota</taxon>
        <taxon>Bacilli</taxon>
        <taxon>Lactobacillales</taxon>
        <taxon>Lactobacillaceae</taxon>
        <taxon>Lactobacillus</taxon>
    </lineage>
</organism>
<comment type="function">
    <text evidence="1">Catalyzes the reversible formation of acyl-phosphate (acyl-PO(4)) from acyl-[acyl-carrier-protein] (acyl-ACP). This enzyme utilizes acyl-ACP as fatty acyl donor, but not acyl-CoA.</text>
</comment>
<comment type="catalytic activity">
    <reaction evidence="1">
        <text>a fatty acyl-[ACP] + phosphate = an acyl phosphate + holo-[ACP]</text>
        <dbReference type="Rhea" id="RHEA:42292"/>
        <dbReference type="Rhea" id="RHEA-COMP:9685"/>
        <dbReference type="Rhea" id="RHEA-COMP:14125"/>
        <dbReference type="ChEBI" id="CHEBI:43474"/>
        <dbReference type="ChEBI" id="CHEBI:59918"/>
        <dbReference type="ChEBI" id="CHEBI:64479"/>
        <dbReference type="ChEBI" id="CHEBI:138651"/>
        <dbReference type="EC" id="2.3.1.274"/>
    </reaction>
</comment>
<comment type="pathway">
    <text evidence="1">Lipid metabolism; phospholipid metabolism.</text>
</comment>
<comment type="subunit">
    <text evidence="1">Homodimer. Probably interacts with PlsY.</text>
</comment>
<comment type="subcellular location">
    <subcellularLocation>
        <location evidence="1">Cytoplasm</location>
    </subcellularLocation>
    <text evidence="1">Associated with the membrane possibly through PlsY.</text>
</comment>
<comment type="similarity">
    <text evidence="1">Belongs to the PlsX family.</text>
</comment>
<evidence type="ECO:0000255" key="1">
    <source>
        <dbReference type="HAMAP-Rule" id="MF_00019"/>
    </source>
</evidence>
<dbReference type="EC" id="2.3.1.274" evidence="1"/>
<dbReference type="EMBL" id="CR954253">
    <property type="protein sequence ID" value="CAI98189.1"/>
    <property type="molecule type" value="Genomic_DNA"/>
</dbReference>
<dbReference type="RefSeq" id="WP_011544025.1">
    <property type="nucleotide sequence ID" value="NC_008054.1"/>
</dbReference>
<dbReference type="SMR" id="Q1G9J9"/>
<dbReference type="STRING" id="390333.Ldb1388"/>
<dbReference type="KEGG" id="ldb:Ldb1388"/>
<dbReference type="PATRIC" id="fig|390333.13.peg.1755"/>
<dbReference type="eggNOG" id="COG0416">
    <property type="taxonomic scope" value="Bacteria"/>
</dbReference>
<dbReference type="HOGENOM" id="CLU_039379_1_1_9"/>
<dbReference type="BioCyc" id="LDEL390333:LDB_RS05965-MONOMER"/>
<dbReference type="UniPathway" id="UPA00085"/>
<dbReference type="Proteomes" id="UP000001259">
    <property type="component" value="Chromosome"/>
</dbReference>
<dbReference type="GO" id="GO:0005737">
    <property type="term" value="C:cytoplasm"/>
    <property type="evidence" value="ECO:0007669"/>
    <property type="project" value="UniProtKB-SubCell"/>
</dbReference>
<dbReference type="GO" id="GO:0043811">
    <property type="term" value="F:phosphate:acyl-[acyl carrier protein] acyltransferase activity"/>
    <property type="evidence" value="ECO:0007669"/>
    <property type="project" value="UniProtKB-UniRule"/>
</dbReference>
<dbReference type="GO" id="GO:0006633">
    <property type="term" value="P:fatty acid biosynthetic process"/>
    <property type="evidence" value="ECO:0007669"/>
    <property type="project" value="UniProtKB-UniRule"/>
</dbReference>
<dbReference type="GO" id="GO:0008654">
    <property type="term" value="P:phospholipid biosynthetic process"/>
    <property type="evidence" value="ECO:0007669"/>
    <property type="project" value="UniProtKB-KW"/>
</dbReference>
<dbReference type="Gene3D" id="3.40.718.10">
    <property type="entry name" value="Isopropylmalate Dehydrogenase"/>
    <property type="match status" value="1"/>
</dbReference>
<dbReference type="HAMAP" id="MF_00019">
    <property type="entry name" value="PlsX"/>
    <property type="match status" value="1"/>
</dbReference>
<dbReference type="InterPro" id="IPR003664">
    <property type="entry name" value="FA_synthesis"/>
</dbReference>
<dbReference type="InterPro" id="IPR012281">
    <property type="entry name" value="Phospholipid_synth_PlsX-like"/>
</dbReference>
<dbReference type="NCBIfam" id="TIGR00182">
    <property type="entry name" value="plsX"/>
    <property type="match status" value="1"/>
</dbReference>
<dbReference type="PANTHER" id="PTHR30100">
    <property type="entry name" value="FATTY ACID/PHOSPHOLIPID SYNTHESIS PROTEIN PLSX"/>
    <property type="match status" value="1"/>
</dbReference>
<dbReference type="PANTHER" id="PTHR30100:SF1">
    <property type="entry name" value="PHOSPHATE ACYLTRANSFERASE"/>
    <property type="match status" value="1"/>
</dbReference>
<dbReference type="Pfam" id="PF02504">
    <property type="entry name" value="FA_synthesis"/>
    <property type="match status" value="1"/>
</dbReference>
<dbReference type="PIRSF" id="PIRSF002465">
    <property type="entry name" value="Phsphlp_syn_PlsX"/>
    <property type="match status" value="1"/>
</dbReference>
<dbReference type="SUPFAM" id="SSF53659">
    <property type="entry name" value="Isocitrate/Isopropylmalate dehydrogenase-like"/>
    <property type="match status" value="1"/>
</dbReference>
<gene>
    <name evidence="1" type="primary">plsX</name>
    <name type="ordered locus">Ldb1388</name>
</gene>
<proteinExistence type="inferred from homology"/>
<accession>Q1G9J9</accession>
<name>PLSX_LACDA</name>
<protein>
    <recommendedName>
        <fullName evidence="1">Phosphate acyltransferase</fullName>
        <ecNumber evidence="1">2.3.1.274</ecNumber>
    </recommendedName>
    <alternativeName>
        <fullName evidence="1">Acyl-ACP phosphotransacylase</fullName>
    </alternativeName>
    <alternativeName>
        <fullName evidence="1">Acyl-[acyl-carrier-protein]--phosphate acyltransferase</fullName>
    </alternativeName>
    <alternativeName>
        <fullName evidence="1">Phosphate-acyl-ACP acyltransferase</fullName>
    </alternativeName>
</protein>